<organism>
    <name type="scientific">Homo sapiens</name>
    <name type="common">Human</name>
    <dbReference type="NCBI Taxonomy" id="9606"/>
    <lineage>
        <taxon>Eukaryota</taxon>
        <taxon>Metazoa</taxon>
        <taxon>Chordata</taxon>
        <taxon>Craniata</taxon>
        <taxon>Vertebrata</taxon>
        <taxon>Euteleostomi</taxon>
        <taxon>Mammalia</taxon>
        <taxon>Eutheria</taxon>
        <taxon>Euarchontoglires</taxon>
        <taxon>Primates</taxon>
        <taxon>Haplorrhini</taxon>
        <taxon>Catarrhini</taxon>
        <taxon>Hominidae</taxon>
        <taxon>Homo</taxon>
    </lineage>
</organism>
<reference key="1">
    <citation type="journal article" date="1998" name="Oncogene">
        <title>A novel gene, LGI1, from 10q24 is rearranged and downregulated in malignant brain tumors.</title>
        <authorList>
            <person name="Chernova O.B."/>
            <person name="Somerville R.P."/>
            <person name="Cowell J.K."/>
        </authorList>
    </citation>
    <scope>NUCLEOTIDE SEQUENCE [MRNA] (ISOFORM 1)</scope>
    <source>
        <tissue>Fetal brain</tissue>
    </source>
</reference>
<reference key="2">
    <citation type="journal article" date="2002" name="Hum. Mol. Genet.">
        <title>Mutations in the LGI1/Epitempin gene on 10q24 cause autosomal dominant lateral temporal epilepsy.</title>
        <authorList>
            <person name="Morante-Redolat J.M."/>
            <person name="Gorostidi-Pagola A."/>
            <person name="Piquer-Sirerol S."/>
            <person name="Saenz A."/>
            <person name="Poza J.J."/>
            <person name="Galan J."/>
            <person name="Gesk S."/>
            <person name="Sarafidou T."/>
            <person name="Mautner V.F."/>
            <person name="Binelli S."/>
            <person name="Staub E."/>
            <person name="Hinzmann B."/>
            <person name="French L."/>
            <person name="Prud'homme J.-F."/>
            <person name="Passarelli D."/>
            <person name="Scannapieco P."/>
            <person name="Tassinari C.A."/>
            <person name="Avanzini G."/>
            <person name="Marti-Masso J.F."/>
            <person name="Kluwe L."/>
            <person name="Deloukas P."/>
            <person name="Moschonas N.K."/>
            <person name="Michelucci R."/>
            <person name="Siebert R."/>
            <person name="Nobile C."/>
            <person name="Perez-Tur J."/>
            <person name="Lopez de Munain A."/>
        </authorList>
    </citation>
    <scope>NUCLEOTIDE SEQUENCE [MRNA] (ISOFORM 2)</scope>
    <scope>DISEASE</scope>
</reference>
<reference key="3">
    <citation type="journal article" date="2003" name="Genome Res.">
        <title>The secreted protein discovery initiative (SPDI), a large-scale effort to identify novel human secreted and transmembrane proteins: a bioinformatics assessment.</title>
        <authorList>
            <person name="Clark H.F."/>
            <person name="Gurney A.L."/>
            <person name="Abaya E."/>
            <person name="Baker K."/>
            <person name="Baldwin D.T."/>
            <person name="Brush J."/>
            <person name="Chen J."/>
            <person name="Chow B."/>
            <person name="Chui C."/>
            <person name="Crowley C."/>
            <person name="Currell B."/>
            <person name="Deuel B."/>
            <person name="Dowd P."/>
            <person name="Eaton D."/>
            <person name="Foster J.S."/>
            <person name="Grimaldi C."/>
            <person name="Gu Q."/>
            <person name="Hass P.E."/>
            <person name="Heldens S."/>
            <person name="Huang A."/>
            <person name="Kim H.S."/>
            <person name="Klimowski L."/>
            <person name="Jin Y."/>
            <person name="Johnson S."/>
            <person name="Lee J."/>
            <person name="Lewis L."/>
            <person name="Liao D."/>
            <person name="Mark M.R."/>
            <person name="Robbie E."/>
            <person name="Sanchez C."/>
            <person name="Schoenfeld J."/>
            <person name="Seshagiri S."/>
            <person name="Simmons L."/>
            <person name="Singh J."/>
            <person name="Smith V."/>
            <person name="Stinson J."/>
            <person name="Vagts A."/>
            <person name="Vandlen R.L."/>
            <person name="Watanabe C."/>
            <person name="Wieand D."/>
            <person name="Woods K."/>
            <person name="Xie M.-H."/>
            <person name="Yansura D.G."/>
            <person name="Yi S."/>
            <person name="Yu G."/>
            <person name="Yuan J."/>
            <person name="Zhang M."/>
            <person name="Zhang Z."/>
            <person name="Goddard A.D."/>
            <person name="Wood W.I."/>
            <person name="Godowski P.J."/>
            <person name="Gray A.M."/>
        </authorList>
    </citation>
    <scope>NUCLEOTIDE SEQUENCE [LARGE SCALE MRNA] (ISOFORM 1)</scope>
</reference>
<reference key="4">
    <citation type="journal article" date="2004" name="Nat. Genet.">
        <title>Complete sequencing and characterization of 21,243 full-length human cDNAs.</title>
        <authorList>
            <person name="Ota T."/>
            <person name="Suzuki Y."/>
            <person name="Nishikawa T."/>
            <person name="Otsuki T."/>
            <person name="Sugiyama T."/>
            <person name="Irie R."/>
            <person name="Wakamatsu A."/>
            <person name="Hayashi K."/>
            <person name="Sato H."/>
            <person name="Nagai K."/>
            <person name="Kimura K."/>
            <person name="Makita H."/>
            <person name="Sekine M."/>
            <person name="Obayashi M."/>
            <person name="Nishi T."/>
            <person name="Shibahara T."/>
            <person name="Tanaka T."/>
            <person name="Ishii S."/>
            <person name="Yamamoto J."/>
            <person name="Saito K."/>
            <person name="Kawai Y."/>
            <person name="Isono Y."/>
            <person name="Nakamura Y."/>
            <person name="Nagahari K."/>
            <person name="Murakami K."/>
            <person name="Yasuda T."/>
            <person name="Iwayanagi T."/>
            <person name="Wagatsuma M."/>
            <person name="Shiratori A."/>
            <person name="Sudo H."/>
            <person name="Hosoiri T."/>
            <person name="Kaku Y."/>
            <person name="Kodaira H."/>
            <person name="Kondo H."/>
            <person name="Sugawara M."/>
            <person name="Takahashi M."/>
            <person name="Kanda K."/>
            <person name="Yokoi T."/>
            <person name="Furuya T."/>
            <person name="Kikkawa E."/>
            <person name="Omura Y."/>
            <person name="Abe K."/>
            <person name="Kamihara K."/>
            <person name="Katsuta N."/>
            <person name="Sato K."/>
            <person name="Tanikawa M."/>
            <person name="Yamazaki M."/>
            <person name="Ninomiya K."/>
            <person name="Ishibashi T."/>
            <person name="Yamashita H."/>
            <person name="Murakawa K."/>
            <person name="Fujimori K."/>
            <person name="Tanai H."/>
            <person name="Kimata M."/>
            <person name="Watanabe M."/>
            <person name="Hiraoka S."/>
            <person name="Chiba Y."/>
            <person name="Ishida S."/>
            <person name="Ono Y."/>
            <person name="Takiguchi S."/>
            <person name="Watanabe S."/>
            <person name="Yosida M."/>
            <person name="Hotuta T."/>
            <person name="Kusano J."/>
            <person name="Kanehori K."/>
            <person name="Takahashi-Fujii A."/>
            <person name="Hara H."/>
            <person name="Tanase T.-O."/>
            <person name="Nomura Y."/>
            <person name="Togiya S."/>
            <person name="Komai F."/>
            <person name="Hara R."/>
            <person name="Takeuchi K."/>
            <person name="Arita M."/>
            <person name="Imose N."/>
            <person name="Musashino K."/>
            <person name="Yuuki H."/>
            <person name="Oshima A."/>
            <person name="Sasaki N."/>
            <person name="Aotsuka S."/>
            <person name="Yoshikawa Y."/>
            <person name="Matsunawa H."/>
            <person name="Ichihara T."/>
            <person name="Shiohata N."/>
            <person name="Sano S."/>
            <person name="Moriya S."/>
            <person name="Momiyama H."/>
            <person name="Satoh N."/>
            <person name="Takami S."/>
            <person name="Terashima Y."/>
            <person name="Suzuki O."/>
            <person name="Nakagawa S."/>
            <person name="Senoh A."/>
            <person name="Mizoguchi H."/>
            <person name="Goto Y."/>
            <person name="Shimizu F."/>
            <person name="Wakebe H."/>
            <person name="Hishigaki H."/>
            <person name="Watanabe T."/>
            <person name="Sugiyama A."/>
            <person name="Takemoto M."/>
            <person name="Kawakami B."/>
            <person name="Yamazaki M."/>
            <person name="Watanabe K."/>
            <person name="Kumagai A."/>
            <person name="Itakura S."/>
            <person name="Fukuzumi Y."/>
            <person name="Fujimori Y."/>
            <person name="Komiyama M."/>
            <person name="Tashiro H."/>
            <person name="Tanigami A."/>
            <person name="Fujiwara T."/>
            <person name="Ono T."/>
            <person name="Yamada K."/>
            <person name="Fujii Y."/>
            <person name="Ozaki K."/>
            <person name="Hirao M."/>
            <person name="Ohmori Y."/>
            <person name="Kawabata A."/>
            <person name="Hikiji T."/>
            <person name="Kobatake N."/>
            <person name="Inagaki H."/>
            <person name="Ikema Y."/>
            <person name="Okamoto S."/>
            <person name="Okitani R."/>
            <person name="Kawakami T."/>
            <person name="Noguchi S."/>
            <person name="Itoh T."/>
            <person name="Shigeta K."/>
            <person name="Senba T."/>
            <person name="Matsumura K."/>
            <person name="Nakajima Y."/>
            <person name="Mizuno T."/>
            <person name="Morinaga M."/>
            <person name="Sasaki M."/>
            <person name="Togashi T."/>
            <person name="Oyama M."/>
            <person name="Hata H."/>
            <person name="Watanabe M."/>
            <person name="Komatsu T."/>
            <person name="Mizushima-Sugano J."/>
            <person name="Satoh T."/>
            <person name="Shirai Y."/>
            <person name="Takahashi Y."/>
            <person name="Nakagawa K."/>
            <person name="Okumura K."/>
            <person name="Nagase T."/>
            <person name="Nomura N."/>
            <person name="Kikuchi H."/>
            <person name="Masuho Y."/>
            <person name="Yamashita R."/>
            <person name="Nakai K."/>
            <person name="Yada T."/>
            <person name="Nakamura Y."/>
            <person name="Ohara O."/>
            <person name="Isogai T."/>
            <person name="Sugano S."/>
        </authorList>
    </citation>
    <scope>NUCLEOTIDE SEQUENCE [LARGE SCALE MRNA] (ISOFORMS 1 AND 3)</scope>
    <source>
        <tissue>Brain</tissue>
        <tissue>Trachea</tissue>
    </source>
</reference>
<reference key="5">
    <citation type="journal article" date="2004" name="Nature">
        <title>The DNA sequence and comparative analysis of human chromosome 10.</title>
        <authorList>
            <person name="Deloukas P."/>
            <person name="Earthrowl M.E."/>
            <person name="Grafham D.V."/>
            <person name="Rubenfield M."/>
            <person name="French L."/>
            <person name="Steward C.A."/>
            <person name="Sims S.K."/>
            <person name="Jones M.C."/>
            <person name="Searle S."/>
            <person name="Scott C."/>
            <person name="Howe K."/>
            <person name="Hunt S.E."/>
            <person name="Andrews T.D."/>
            <person name="Gilbert J.G.R."/>
            <person name="Swarbreck D."/>
            <person name="Ashurst J.L."/>
            <person name="Taylor A."/>
            <person name="Battles J."/>
            <person name="Bird C.P."/>
            <person name="Ainscough R."/>
            <person name="Almeida J.P."/>
            <person name="Ashwell R.I.S."/>
            <person name="Ambrose K.D."/>
            <person name="Babbage A.K."/>
            <person name="Bagguley C.L."/>
            <person name="Bailey J."/>
            <person name="Banerjee R."/>
            <person name="Bates K."/>
            <person name="Beasley H."/>
            <person name="Bray-Allen S."/>
            <person name="Brown A.J."/>
            <person name="Brown J.Y."/>
            <person name="Burford D.C."/>
            <person name="Burrill W."/>
            <person name="Burton J."/>
            <person name="Cahill P."/>
            <person name="Camire D."/>
            <person name="Carter N.P."/>
            <person name="Chapman J.C."/>
            <person name="Clark S.Y."/>
            <person name="Clarke G."/>
            <person name="Clee C.M."/>
            <person name="Clegg S."/>
            <person name="Corby N."/>
            <person name="Coulson A."/>
            <person name="Dhami P."/>
            <person name="Dutta I."/>
            <person name="Dunn M."/>
            <person name="Faulkner L."/>
            <person name="Frankish A."/>
            <person name="Frankland J.A."/>
            <person name="Garner P."/>
            <person name="Garnett J."/>
            <person name="Gribble S."/>
            <person name="Griffiths C."/>
            <person name="Grocock R."/>
            <person name="Gustafson E."/>
            <person name="Hammond S."/>
            <person name="Harley J.L."/>
            <person name="Hart E."/>
            <person name="Heath P.D."/>
            <person name="Ho T.P."/>
            <person name="Hopkins B."/>
            <person name="Horne J."/>
            <person name="Howden P.J."/>
            <person name="Huckle E."/>
            <person name="Hynds C."/>
            <person name="Johnson C."/>
            <person name="Johnson D."/>
            <person name="Kana A."/>
            <person name="Kay M."/>
            <person name="Kimberley A.M."/>
            <person name="Kershaw J.K."/>
            <person name="Kokkinaki M."/>
            <person name="Laird G.K."/>
            <person name="Lawlor S."/>
            <person name="Lee H.M."/>
            <person name="Leongamornlert D.A."/>
            <person name="Laird G."/>
            <person name="Lloyd C."/>
            <person name="Lloyd D.M."/>
            <person name="Loveland J."/>
            <person name="Lovell J."/>
            <person name="McLaren S."/>
            <person name="McLay K.E."/>
            <person name="McMurray A."/>
            <person name="Mashreghi-Mohammadi M."/>
            <person name="Matthews L."/>
            <person name="Milne S."/>
            <person name="Nickerson T."/>
            <person name="Nguyen M."/>
            <person name="Overton-Larty E."/>
            <person name="Palmer S.A."/>
            <person name="Pearce A.V."/>
            <person name="Peck A.I."/>
            <person name="Pelan S."/>
            <person name="Phillimore B."/>
            <person name="Porter K."/>
            <person name="Rice C.M."/>
            <person name="Rogosin A."/>
            <person name="Ross M.T."/>
            <person name="Sarafidou T."/>
            <person name="Sehra H.K."/>
            <person name="Shownkeen R."/>
            <person name="Skuce C.D."/>
            <person name="Smith M."/>
            <person name="Standring L."/>
            <person name="Sycamore N."/>
            <person name="Tester J."/>
            <person name="Thorpe A."/>
            <person name="Torcasso W."/>
            <person name="Tracey A."/>
            <person name="Tromans A."/>
            <person name="Tsolas J."/>
            <person name="Wall M."/>
            <person name="Walsh J."/>
            <person name="Wang H."/>
            <person name="Weinstock K."/>
            <person name="West A.P."/>
            <person name="Willey D.L."/>
            <person name="Whitehead S.L."/>
            <person name="Wilming L."/>
            <person name="Wray P.W."/>
            <person name="Young L."/>
            <person name="Chen Y."/>
            <person name="Lovering R.C."/>
            <person name="Moschonas N.K."/>
            <person name="Siebert R."/>
            <person name="Fechtel K."/>
            <person name="Bentley D."/>
            <person name="Durbin R.M."/>
            <person name="Hubbard T."/>
            <person name="Doucette-Stamm L."/>
            <person name="Beck S."/>
            <person name="Smith D.R."/>
            <person name="Rogers J."/>
        </authorList>
    </citation>
    <scope>NUCLEOTIDE SEQUENCE [LARGE SCALE GENOMIC DNA]</scope>
</reference>
<reference key="6">
    <citation type="submission" date="2005-09" db="EMBL/GenBank/DDBJ databases">
        <authorList>
            <person name="Mural R.J."/>
            <person name="Istrail S."/>
            <person name="Sutton G.G."/>
            <person name="Florea L."/>
            <person name="Halpern A.L."/>
            <person name="Mobarry C.M."/>
            <person name="Lippert R."/>
            <person name="Walenz B."/>
            <person name="Shatkay H."/>
            <person name="Dew I."/>
            <person name="Miller J.R."/>
            <person name="Flanigan M.J."/>
            <person name="Edwards N.J."/>
            <person name="Bolanos R."/>
            <person name="Fasulo D."/>
            <person name="Halldorsson B.V."/>
            <person name="Hannenhalli S."/>
            <person name="Turner R."/>
            <person name="Yooseph S."/>
            <person name="Lu F."/>
            <person name="Nusskern D.R."/>
            <person name="Shue B.C."/>
            <person name="Zheng X.H."/>
            <person name="Zhong F."/>
            <person name="Delcher A.L."/>
            <person name="Huson D.H."/>
            <person name="Kravitz S.A."/>
            <person name="Mouchard L."/>
            <person name="Reinert K."/>
            <person name="Remington K.A."/>
            <person name="Clark A.G."/>
            <person name="Waterman M.S."/>
            <person name="Eichler E.E."/>
            <person name="Adams M.D."/>
            <person name="Hunkapiller M.W."/>
            <person name="Myers E.W."/>
            <person name="Venter J.C."/>
        </authorList>
    </citation>
    <scope>NUCLEOTIDE SEQUENCE [LARGE SCALE GENOMIC DNA]</scope>
</reference>
<reference key="7">
    <citation type="journal article" date="2004" name="Genome Res.">
        <title>The status, quality, and expansion of the NIH full-length cDNA project: the Mammalian Gene Collection (MGC).</title>
        <authorList>
            <consortium name="The MGC Project Team"/>
        </authorList>
    </citation>
    <scope>NUCLEOTIDE SEQUENCE [LARGE SCALE MRNA] (ISOFORM 1)</scope>
    <source>
        <tissue>Brain</tissue>
    </source>
</reference>
<reference key="8">
    <citation type="journal article" date="2004" name="J. Biol. Chem.">
        <title>LGI1, a putative tumor metastasis suppressor gene, controls in vitro invasiveness and expression of matrix metalloproteinases in glioma cells through the ERK1/2 pathway.</title>
        <authorList>
            <person name="Kunapuli P."/>
            <person name="Kasyapa C.S."/>
            <person name="Hawthorn L."/>
            <person name="Cowell J.K."/>
        </authorList>
    </citation>
    <scope>FUNCTION</scope>
</reference>
<reference key="9">
    <citation type="journal article" date="2007" name="J. Biol. Chem.">
        <authorList>
            <person name="Kunapuli P."/>
            <person name="Kasyapa C.S."/>
            <person name="Hawthorn L."/>
            <person name="Cowell J.K."/>
        </authorList>
    </citation>
    <scope>ERRATUM OF PUBMED:15047712</scope>
</reference>
<reference key="10">
    <citation type="journal article" date="2006" name="Hum. Mol. Genet.">
        <title>The epilepsy gene LGI1 encodes a secreted glycoprotein that binds to the cell surface.</title>
        <authorList>
            <person name="Sirerol-Piquer M.S."/>
            <person name="Ayerdi-Izquierdo A."/>
            <person name="Morante-Redolat J.M."/>
            <person name="Herranz-Perez V."/>
            <person name="Favell K."/>
            <person name="Barker P.A."/>
            <person name="Perez-Tur J."/>
        </authorList>
    </citation>
    <scope>SUBCELLULAR LOCATION (ISOFORMS 1 AND 2)</scope>
    <scope>GLYCOSYLATION</scope>
    <scope>MUTAGENESIS OF ASN-192; ASN-277 AND ASN-422</scope>
    <scope>CHARACTERIZATION OF VARIANTS ETL1 ARG-46; ARG-145; ARG-200; CYS-318 AND ALA-383</scope>
</reference>
<reference key="11">
    <citation type="journal article" date="2006" name="J. Cell. Physiol.">
        <title>Increased expression of LGI1 gene triggers growth inhibition and apoptosis of neuroblastoma cells.</title>
        <authorList>
            <person name="Gabellini N."/>
            <person name="Masola V."/>
            <person name="Quartesan S."/>
            <person name="Oselladore B."/>
            <person name="Nobile C."/>
            <person name="Michelucci R."/>
            <person name="Curtarello M."/>
            <person name="Parolin C."/>
            <person name="Palu G."/>
        </authorList>
    </citation>
    <scope>FUNCTION</scope>
    <scope>INDUCTION</scope>
    <scope>TISSUE SPECIFICITY</scope>
</reference>
<reference key="12">
    <citation type="journal article" date="2006" name="J. Neurochem.">
        <title>The LGI1/epitempin gene encodes two protein isoforms differentially expressed in human brain.</title>
        <authorList>
            <person name="Furlan S."/>
            <person name="Roncaroli F."/>
            <person name="Forner F."/>
            <person name="Vitiello L."/>
            <person name="Calabria E."/>
            <person name="Piquer-Sirerol S."/>
            <person name="Valle G."/>
            <person name="Perez-Tur J."/>
            <person name="Michelucci R."/>
            <person name="Nobile C."/>
        </authorList>
    </citation>
    <scope>SUBCELLULAR LOCATION</scope>
    <scope>ALTERNATIVE SPLICING</scope>
    <scope>TISSUE SPECIFICITY (ISOFORMS 1 AND 3)</scope>
</reference>
<reference key="13">
    <citation type="journal article" date="2007" name="Arch. Neurol.">
        <title>Two novel epilepsy-linked mutations leading to a loss of function of LGI1.</title>
        <authorList>
            <person name="Chabrol E."/>
            <person name="Popescu C."/>
            <person name="Gourfinkel-An I."/>
            <person name="Trouillard O."/>
            <person name="Depienne C."/>
            <person name="Senechal K."/>
            <person name="Baulac M."/>
            <person name="LeGuern E."/>
            <person name="Baulac S."/>
        </authorList>
    </citation>
    <scope>SUBCELLULAR LOCATION</scope>
    <scope>VARIANT ETL1 PRO-232</scope>
    <scope>CHARACTERIZATION OF VARIANTS ETL1 PRO-232 AND ALA-383</scope>
</reference>
<reference key="14">
    <citation type="journal article" date="2016" name="Neurol. Genet.">
        <title>Dysfunctional ADAM22 implicated in progressive encephalopathy with cortical atrophy and epilepsy.</title>
        <authorList>
            <person name="Muona M."/>
            <person name="Fukata Y."/>
            <person name="Anttonen A.K."/>
            <person name="Laari A."/>
            <person name="Palotie A."/>
            <person name="Pihko H."/>
            <person name="Loennqvist T."/>
            <person name="Valanne L."/>
            <person name="Somer M."/>
            <person name="Fukata M."/>
            <person name="Lehesjoki A.E."/>
        </authorList>
    </citation>
    <scope>INTERACTION WITH ADAM22</scope>
</reference>
<reference key="15">
    <citation type="journal article" date="2009" name="Hum. Mutat.">
        <title>LGI1 mutations in autosomal dominant and sporadic lateral temporal epilepsy.</title>
        <authorList>
            <person name="Nobile C."/>
            <person name="Michelucci R."/>
            <person name="Andreazza S."/>
            <person name="Pasini E."/>
            <person name="Tosatto S.C."/>
            <person name="Striano P."/>
        </authorList>
    </citation>
    <scope>VARIANTS ETL1 ARG-42; GLY-42; ARG-46; ASP-110; LYS-122; LYS-123; TRP-136; ARG-145; PRO-154; ARG-200; PRO-232; THR-298; CYS-318; ALA-383; GLU-432 AND LEU-473</scope>
    <scope>REVIEW</scope>
</reference>
<reference key="16">
    <citation type="journal article" date="2002" name="Nat. Genet.">
        <title>Mutations in LGI1 cause autosomal-dominant partial epilepsy with auditory features.</title>
        <authorList>
            <person name="Kalachikov S."/>
            <person name="Evgrafov O."/>
            <person name="Ross B."/>
            <person name="Winawer M."/>
            <person name="Barker-Cummings C."/>
            <person name="Boneschi F.M."/>
            <person name="Choi C."/>
            <person name="Morozov P."/>
            <person name="Das K."/>
            <person name="Teplitskaya E."/>
            <person name="Yu A."/>
            <person name="Cayanis E."/>
            <person name="Penchaszadeh G."/>
            <person name="Kottmann A.H."/>
            <person name="Pedley T.A."/>
            <person name="Hauser W.A."/>
            <person name="Ottman R."/>
            <person name="Gilliam T.C."/>
        </authorList>
    </citation>
    <scope>VARIANT ETL1 ALA-383</scope>
</reference>
<reference key="17">
    <citation type="journal article" date="2002" name="Ann. Neurol.">
        <title>LGI1 is mutated in familial temporal lobe epilepsy characterized by aphasic seizures.</title>
        <authorList>
            <person name="Gu W."/>
            <person name="Brodtkorb E."/>
            <person name="Steinlein O.K."/>
        </authorList>
    </citation>
    <scope>VARIANT ETL1 ARG-46</scope>
</reference>
<reference key="18">
    <citation type="journal article" date="2003" name="Ann. Neurol.">
        <title>Epilepsy with auditory features: a LGI1 gene mutation suggests a loss-of-function mechanism.</title>
        <authorList>
            <person name="Pizzuti A."/>
            <person name="Flex E."/>
            <person name="Di Bonaventura C."/>
            <person name="Dottorini T."/>
            <person name="Egeo G."/>
            <person name="Manfredi M."/>
            <person name="Dallapiccola B."/>
            <person name="Giallonardo A.T."/>
        </authorList>
    </citation>
    <scope>VARIANT ETL1 ARG-26</scope>
</reference>
<reference key="19">
    <citation type="journal article" date="2003" name="Neurology">
        <title>Novel LGI1 mutation in a family with autosomal dominant partial epilepsy with auditory features.</title>
        <authorList>
            <person name="Fertig E."/>
            <person name="Lincoln A."/>
            <person name="Martinuzzi A."/>
            <person name="Mattson R.H."/>
            <person name="Hisama F.M."/>
        </authorList>
    </citation>
    <scope>VARIANT ETL1 CYS-318</scope>
</reference>
<reference key="20">
    <citation type="journal article" date="2004" name="Neurology">
        <title>LGI1 mutations in temporal lobe epilepsies.</title>
        <authorList>
            <person name="Berkovic S.F."/>
            <person name="Izzillo P."/>
            <person name="McMahon J.M."/>
            <person name="Harkin L.A."/>
            <person name="McIntosh A.M."/>
            <person name="Phillips H.A."/>
            <person name="Briellmann R.S."/>
            <person name="Wallace R.H."/>
            <person name="Mazarib A."/>
            <person name="Neufeld M.Y."/>
            <person name="Korczyn A.D."/>
            <person name="Scheffer I.E."/>
            <person name="Mulley J.C."/>
        </authorList>
    </citation>
    <scope>VARIANTS ETL1 GLY-42 AND LEU-473</scope>
</reference>
<reference key="21">
    <citation type="journal article" date="2007" name="Neurology">
        <title>A de novo LGI1 mutation causing idiopathic partial epilepsy with telephone-induced seizures.</title>
        <authorList>
            <person name="Michelucci R."/>
            <person name="Mecarelli O."/>
            <person name="Bovo G."/>
            <person name="Bisulli F."/>
            <person name="Testoni S."/>
            <person name="Striano P."/>
            <person name="Striano S."/>
            <person name="Tinuper P."/>
            <person name="Nobile C."/>
        </authorList>
    </citation>
    <scope>VARIANT ETL1 TRP-136</scope>
</reference>
<reference key="22">
    <citation type="journal article" date="2008" name="Arch. Neurol.">
        <title>A novel loss-of-function LGI1 mutation linked to autosomal dominant lateral temporal epilepsy.</title>
        <authorList>
            <person name="Striano P."/>
            <person name="de Falco A."/>
            <person name="Diani E."/>
            <person name="Bovo G."/>
            <person name="Furlan S."/>
            <person name="Vitiello L."/>
            <person name="Pinardi F."/>
            <person name="Striano S."/>
            <person name="Michelucci R."/>
            <person name="de Falco F.A."/>
            <person name="Nobile C."/>
        </authorList>
    </citation>
    <scope>VARIANT ETL1 LYS-122</scope>
</reference>
<reference key="23">
    <citation type="journal article" date="2009" name="Epilepsia">
        <title>Drug resistant ADLTE and recurrent partial status epilepticus with dysphasic features in a family with a novel LGI1mutation: electroclinical, genetic, and EEG/fMRI findings.</title>
        <authorList>
            <person name="Bonaventura C.D."/>
            <person name="Carni M."/>
            <person name="Diani E."/>
            <person name="Fattouch J."/>
            <person name="Vaudano E.A."/>
            <person name="Egeo G."/>
            <person name="Pantano P."/>
            <person name="Maraviglia B."/>
            <person name="Bozzao L."/>
            <person name="Manfredi M."/>
            <person name="Prencipe M."/>
            <person name="Giallonardo T.A."/>
            <person name="Nobile C."/>
        </authorList>
    </citation>
    <scope>VARIANT ETL1 LYS-123</scope>
</reference>
<feature type="signal peptide" evidence="4">
    <location>
        <begin position="1"/>
        <end position="34"/>
    </location>
</feature>
<feature type="chain" id="PRO_0000017705" description="Leucine-rich glioma-inactivated protein 1">
    <location>
        <begin position="35"/>
        <end position="557"/>
    </location>
</feature>
<feature type="domain" description="LRRNT">
    <location>
        <begin position="35"/>
        <end position="72"/>
    </location>
</feature>
<feature type="repeat" description="LRR 1">
    <location>
        <begin position="92"/>
        <end position="113"/>
    </location>
</feature>
<feature type="repeat" description="LRR 2">
    <location>
        <begin position="116"/>
        <end position="137"/>
    </location>
</feature>
<feature type="repeat" description="LRR 3">
    <location>
        <begin position="140"/>
        <end position="161"/>
    </location>
</feature>
<feature type="domain" description="LRRCT">
    <location>
        <begin position="173"/>
        <end position="223"/>
    </location>
</feature>
<feature type="repeat" description="EAR 1" evidence="5">
    <location>
        <begin position="225"/>
        <end position="267"/>
    </location>
</feature>
<feature type="repeat" description="EAR 2" evidence="5">
    <location>
        <begin position="271"/>
        <end position="313"/>
    </location>
</feature>
<feature type="repeat" description="EAR 3" evidence="5">
    <location>
        <begin position="317"/>
        <end position="364"/>
    </location>
</feature>
<feature type="repeat" description="EAR 4" evidence="5">
    <location>
        <begin position="366"/>
        <end position="415"/>
    </location>
</feature>
<feature type="repeat" description="EAR 5" evidence="5">
    <location>
        <begin position="419"/>
        <end position="462"/>
    </location>
</feature>
<feature type="repeat" description="EAR 6" evidence="5">
    <location>
        <begin position="464"/>
        <end position="506"/>
    </location>
</feature>
<feature type="repeat" description="EAR 7" evidence="5">
    <location>
        <begin position="510"/>
        <end position="552"/>
    </location>
</feature>
<feature type="glycosylation site" description="N-linked (GlcNAc...) asparagine" evidence="4">
    <location>
        <position position="192"/>
    </location>
</feature>
<feature type="glycosylation site" description="N-linked (GlcNAc...) asparagine" evidence="4">
    <location>
        <position position="277"/>
    </location>
</feature>
<feature type="glycosylation site" description="N-linked (GlcNAc...) asparagine" evidence="4">
    <location>
        <position position="422"/>
    </location>
</feature>
<feature type="splice variant" id="VSP_038234" description="In isoform 3." evidence="23">
    <location>
        <begin position="96"/>
        <end position="143"/>
    </location>
</feature>
<feature type="splice variant" id="VSP_007678" description="In isoform 2." evidence="22">
    <original>GTSTVVCKPIVI</original>
    <variation>VLREIHRFTNMS</variation>
    <location>
        <begin position="280"/>
        <end position="291"/>
    </location>
</feature>
<feature type="splice variant" id="VSP_007679" description="In isoform 2." evidence="22">
    <location>
        <begin position="292"/>
        <end position="557"/>
    </location>
</feature>
<feature type="sequence variant" id="VAR_015771" description="In ETL1; probably affects signal sequence processing and secretion." evidence="8">
    <original>L</original>
    <variation>R</variation>
    <location>
        <position position="26"/>
    </location>
</feature>
<feature type="sequence variant" id="VAR_023008" description="In ETL1; dbSNP:rs797044996." evidence="11 18">
    <original>C</original>
    <variation>G</variation>
    <location>
        <position position="42"/>
    </location>
</feature>
<feature type="sequence variant" id="VAR_058538" description="In ETL1; dbSNP:rs797044996." evidence="18">
    <original>C</original>
    <variation>R</variation>
    <location>
        <position position="42"/>
    </location>
</feature>
<feature type="sequence variant" id="VAR_015772" description="In ETL1; loss of protein secretion; does not affect glycosylation status of the protein; dbSNP:rs104894166." evidence="7 14 18">
    <original>C</original>
    <variation>R</variation>
    <location>
        <position position="46"/>
    </location>
</feature>
<feature type="sequence variant" id="VAR_058539" description="In ETL1." evidence="18">
    <original>A</original>
    <variation>D</variation>
    <location>
        <position position="110"/>
    </location>
</feature>
<feature type="sequence variant" id="VAR_058540" description="In ETL1; dbSNP:rs119488100." evidence="17 18">
    <original>I</original>
    <variation>K</variation>
    <location>
        <position position="122"/>
    </location>
</feature>
<feature type="sequence variant" id="VAR_058541" description="In ETL1." evidence="18 19">
    <original>E</original>
    <variation>K</variation>
    <location>
        <position position="123"/>
    </location>
</feature>
<feature type="sequence variant" id="VAR_058542" description="In ETL1; dbSNP:rs119488099." evidence="16 18">
    <original>R</original>
    <variation>W</variation>
    <location>
        <position position="136"/>
    </location>
</feature>
<feature type="sequence variant" id="VAR_058543" description="In ETL1; loss of protein secretion; does not affect glycosylation status of the protein." evidence="14 18">
    <original>S</original>
    <variation>R</variation>
    <location>
        <position position="145"/>
    </location>
</feature>
<feature type="sequence variant" id="VAR_058544" description="In ETL1." evidence="18">
    <original>L</original>
    <variation>P</variation>
    <location>
        <position position="154"/>
    </location>
</feature>
<feature type="sequence variant" id="VAR_058545" description="In ETL1; loss of protein secretion; does not affect glycosylation status of the protein; dbSNP:rs2059947923." evidence="14 18">
    <original>C</original>
    <variation>R</variation>
    <location>
        <position position="200"/>
    </location>
</feature>
<feature type="sequence variant" id="VAR_058546" description="In ETL1; loss of protein secretion; dbSNP:rs104894167." evidence="15 18">
    <original>L</original>
    <variation>P</variation>
    <location>
        <position position="232"/>
    </location>
</feature>
<feature type="sequence variant" id="VAR_058547" description="In ETL1." evidence="18">
    <original>I</original>
    <variation>T</variation>
    <location>
        <position position="298"/>
    </location>
</feature>
<feature type="sequence variant" id="VAR_015774" description="In ETL1; loss of protein secretion; protein is retained in the endoplasmic reticulum; does not affect glycosylation status of the protein; dbSNP:rs28939075." evidence="9 14 18">
    <original>F</original>
    <variation>C</variation>
    <location>
        <position position="318"/>
    </location>
</feature>
<feature type="sequence variant" id="VAR_015773" description="In ETL1; loss of protein secretion; protein is retained in the endoplasmic reticulum; does not affect glycosylation status of the protein; dbSNP:rs28937874." evidence="6 14 15 18">
    <original>E</original>
    <variation>A</variation>
    <location>
        <position position="383"/>
    </location>
</feature>
<feature type="sequence variant" id="VAR_058548" description="In ETL1." evidence="18">
    <original>V</original>
    <variation>E</variation>
    <location>
        <position position="432"/>
    </location>
</feature>
<feature type="sequence variant" id="VAR_023009" description="In ETL1; dbSNP:rs797044999." evidence="11 18">
    <original>S</original>
    <variation>L</variation>
    <location>
        <position position="473"/>
    </location>
</feature>
<feature type="mutagenesis site" description="Affects glycosylation; when associated with Q-277 and Q-422. Loss of protein secretion; when associated with Q-277 and Q-422." evidence="14">
    <original>N</original>
    <variation>Q</variation>
    <location>
        <position position="192"/>
    </location>
</feature>
<feature type="mutagenesis site" description="Affects glycosylation; when associated with Q-192 and Q-422. Loss of protein secretion; when associated with Q-192 and Q-422." evidence="14">
    <original>N</original>
    <variation>Q</variation>
    <location>
        <position position="277"/>
    </location>
</feature>
<feature type="mutagenesis site" description="Affects glycosylation; when associated with Q-192 and Q-277. Loss of protein secretion; when associated with Q-192 and Q-277." evidence="14">
    <original>N</original>
    <variation>Q</variation>
    <location>
        <position position="422"/>
    </location>
</feature>
<feature type="strand" evidence="25">
    <location>
        <begin position="46"/>
        <end position="48"/>
    </location>
</feature>
<feature type="strand" evidence="25">
    <location>
        <begin position="50"/>
        <end position="57"/>
    </location>
</feature>
<feature type="strand" evidence="25">
    <location>
        <begin position="70"/>
        <end position="76"/>
    </location>
</feature>
<feature type="turn" evidence="25">
    <location>
        <begin position="84"/>
        <end position="89"/>
    </location>
</feature>
<feature type="strand" evidence="25">
    <location>
        <begin position="94"/>
        <end position="100"/>
    </location>
</feature>
<feature type="strand" evidence="25">
    <location>
        <begin position="102"/>
        <end position="106"/>
    </location>
</feature>
<feature type="turn" evidence="25">
    <location>
        <begin position="108"/>
        <end position="113"/>
    </location>
</feature>
<feature type="strand" evidence="25">
    <location>
        <begin position="119"/>
        <end position="124"/>
    </location>
</feature>
<feature type="strand" evidence="25">
    <location>
        <begin position="126"/>
        <end position="128"/>
    </location>
</feature>
<feature type="turn" evidence="25">
    <location>
        <begin position="132"/>
        <end position="137"/>
    </location>
</feature>
<feature type="strand" evidence="25">
    <location>
        <begin position="143"/>
        <end position="145"/>
    </location>
</feature>
<feature type="turn" evidence="25">
    <location>
        <begin position="156"/>
        <end position="161"/>
    </location>
</feature>
<feature type="strand" evidence="25">
    <location>
        <begin position="167"/>
        <end position="169"/>
    </location>
</feature>
<feature type="helix" evidence="25">
    <location>
        <begin position="179"/>
        <end position="181"/>
    </location>
</feature>
<feature type="helix" evidence="25">
    <location>
        <begin position="182"/>
        <end position="190"/>
    </location>
</feature>
<feature type="strand" evidence="25">
    <location>
        <begin position="193"/>
        <end position="195"/>
    </location>
</feature>
<feature type="strand" evidence="26">
    <location>
        <begin position="199"/>
        <end position="203"/>
    </location>
</feature>
<feature type="helix" evidence="25">
    <location>
        <begin position="204"/>
        <end position="206"/>
    </location>
</feature>
<feature type="strand" evidence="26">
    <location>
        <begin position="208"/>
        <end position="210"/>
    </location>
</feature>
<feature type="helix" evidence="25">
    <location>
        <begin position="211"/>
        <end position="213"/>
    </location>
</feature>
<feature type="helix" evidence="25">
    <location>
        <begin position="216"/>
        <end position="218"/>
    </location>
</feature>
<feature type="strand" evidence="24">
    <location>
        <begin position="225"/>
        <end position="234"/>
    </location>
</feature>
<feature type="strand" evidence="24">
    <location>
        <begin position="239"/>
        <end position="244"/>
    </location>
</feature>
<feature type="strand" evidence="24">
    <location>
        <begin position="247"/>
        <end position="253"/>
    </location>
</feature>
<feature type="turn" evidence="24">
    <location>
        <begin position="255"/>
        <end position="257"/>
    </location>
</feature>
<feature type="strand" evidence="24">
    <location>
        <begin position="259"/>
        <end position="266"/>
    </location>
</feature>
<feature type="turn" evidence="24">
    <location>
        <begin position="267"/>
        <end position="270"/>
    </location>
</feature>
<feature type="strand" evidence="24">
    <location>
        <begin position="271"/>
        <end position="279"/>
    </location>
</feature>
<feature type="strand" evidence="24">
    <location>
        <begin position="283"/>
        <end position="291"/>
    </location>
</feature>
<feature type="strand" evidence="24">
    <location>
        <begin position="294"/>
        <end position="304"/>
    </location>
</feature>
<feature type="strand" evidence="24">
    <location>
        <begin position="307"/>
        <end position="312"/>
    </location>
</feature>
<feature type="turn" evidence="24">
    <location>
        <begin position="313"/>
        <end position="316"/>
    </location>
</feature>
<feature type="strand" evidence="24">
    <location>
        <begin position="317"/>
        <end position="323"/>
    </location>
</feature>
<feature type="turn" evidence="24">
    <location>
        <begin position="326"/>
        <end position="328"/>
    </location>
</feature>
<feature type="strand" evidence="24">
    <location>
        <begin position="331"/>
        <end position="340"/>
    </location>
</feature>
<feature type="strand" evidence="24">
    <location>
        <begin position="343"/>
        <end position="350"/>
    </location>
</feature>
<feature type="strand" evidence="24">
    <location>
        <begin position="352"/>
        <end position="355"/>
    </location>
</feature>
<feature type="strand" evidence="24">
    <location>
        <begin position="357"/>
        <end position="362"/>
    </location>
</feature>
<feature type="strand" evidence="24">
    <location>
        <begin position="367"/>
        <end position="374"/>
    </location>
</feature>
<feature type="strand" evidence="24">
    <location>
        <begin position="379"/>
        <end position="387"/>
    </location>
</feature>
<feature type="strand" evidence="24">
    <location>
        <begin position="396"/>
        <end position="403"/>
    </location>
</feature>
<feature type="strand" evidence="24">
    <location>
        <begin position="409"/>
        <end position="414"/>
    </location>
</feature>
<feature type="turn" evidence="24">
    <location>
        <begin position="415"/>
        <end position="418"/>
    </location>
</feature>
<feature type="strand" evidence="24">
    <location>
        <begin position="419"/>
        <end position="425"/>
    </location>
</feature>
<feature type="strand" evidence="24">
    <location>
        <begin position="434"/>
        <end position="440"/>
    </location>
</feature>
<feature type="strand" evidence="24">
    <location>
        <begin position="443"/>
        <end position="449"/>
    </location>
</feature>
<feature type="strand" evidence="24">
    <location>
        <begin position="451"/>
        <end position="461"/>
    </location>
</feature>
<feature type="strand" evidence="24">
    <location>
        <begin position="464"/>
        <end position="475"/>
    </location>
</feature>
<feature type="strand" evidence="24">
    <location>
        <begin position="479"/>
        <end position="484"/>
    </location>
</feature>
<feature type="strand" evidence="24">
    <location>
        <begin position="487"/>
        <end position="492"/>
    </location>
</feature>
<feature type="strand" evidence="24">
    <location>
        <begin position="495"/>
        <end position="497"/>
    </location>
</feature>
<feature type="strand" evidence="24">
    <location>
        <begin position="499"/>
        <end position="505"/>
    </location>
</feature>
<feature type="turn" evidence="24">
    <location>
        <begin position="506"/>
        <end position="509"/>
    </location>
</feature>
<feature type="strand" evidence="24">
    <location>
        <begin position="510"/>
        <end position="517"/>
    </location>
</feature>
<feature type="strand" evidence="24">
    <location>
        <begin position="520"/>
        <end position="530"/>
    </location>
</feature>
<feature type="strand" evidence="24">
    <location>
        <begin position="533"/>
        <end position="543"/>
    </location>
</feature>
<feature type="strand" evidence="24">
    <location>
        <begin position="545"/>
        <end position="551"/>
    </location>
</feature>
<evidence type="ECO:0000250" key="1"/>
<evidence type="ECO:0000250" key="2">
    <source>
        <dbReference type="UniProtKB" id="Q8K4Y5"/>
    </source>
</evidence>
<evidence type="ECO:0000250" key="3">
    <source>
        <dbReference type="UniProtKB" id="Q9JIA1"/>
    </source>
</evidence>
<evidence type="ECO:0000255" key="4"/>
<evidence type="ECO:0000255" key="5">
    <source>
        <dbReference type="PROSITE-ProRule" id="PRU00075"/>
    </source>
</evidence>
<evidence type="ECO:0000269" key="6">
    <source>
    </source>
</evidence>
<evidence type="ECO:0000269" key="7">
    <source>
    </source>
</evidence>
<evidence type="ECO:0000269" key="8">
    <source>
    </source>
</evidence>
<evidence type="ECO:0000269" key="9">
    <source>
    </source>
</evidence>
<evidence type="ECO:0000269" key="10">
    <source>
    </source>
</evidence>
<evidence type="ECO:0000269" key="11">
    <source>
    </source>
</evidence>
<evidence type="ECO:0000269" key="12">
    <source>
    </source>
</evidence>
<evidence type="ECO:0000269" key="13">
    <source>
    </source>
</evidence>
<evidence type="ECO:0000269" key="14">
    <source>
    </source>
</evidence>
<evidence type="ECO:0000269" key="15">
    <source>
    </source>
</evidence>
<evidence type="ECO:0000269" key="16">
    <source>
    </source>
</evidence>
<evidence type="ECO:0000269" key="17">
    <source>
    </source>
</evidence>
<evidence type="ECO:0000269" key="18">
    <source>
    </source>
</evidence>
<evidence type="ECO:0000269" key="19">
    <source>
    </source>
</evidence>
<evidence type="ECO:0000269" key="20">
    <source>
    </source>
</evidence>
<evidence type="ECO:0000269" key="21">
    <source>
    </source>
</evidence>
<evidence type="ECO:0000303" key="22">
    <source>
    </source>
</evidence>
<evidence type="ECO:0000303" key="23">
    <source>
    </source>
</evidence>
<evidence type="ECO:0007829" key="24">
    <source>
        <dbReference type="PDB" id="5Y2Z"/>
    </source>
</evidence>
<evidence type="ECO:0007829" key="25">
    <source>
        <dbReference type="PDB" id="5Y30"/>
    </source>
</evidence>
<evidence type="ECO:0007829" key="26">
    <source>
        <dbReference type="PDB" id="8HQ2"/>
    </source>
</evidence>
<name>LGI1_HUMAN</name>
<gene>
    <name type="primary">LGI1</name>
    <name type="synonym">EPT</name>
    <name type="ORF">UNQ775/PRO1569</name>
</gene>
<protein>
    <recommendedName>
        <fullName>Leucine-rich glioma-inactivated protein 1</fullName>
    </recommendedName>
    <alternativeName>
        <fullName>Epitempin-1</fullName>
    </alternativeName>
</protein>
<dbReference type="EMBL" id="AF055636">
    <property type="protein sequence ID" value="AAC99316.1"/>
    <property type="molecule type" value="mRNA"/>
</dbReference>
<dbReference type="EMBL" id="AF473548">
    <property type="protein sequence ID" value="AAM22074.1"/>
    <property type="molecule type" value="mRNA"/>
</dbReference>
<dbReference type="EMBL" id="AY358885">
    <property type="protein sequence ID" value="AAQ89244.1"/>
    <property type="molecule type" value="mRNA"/>
</dbReference>
<dbReference type="EMBL" id="AK289706">
    <property type="protein sequence ID" value="BAF82395.1"/>
    <property type="molecule type" value="mRNA"/>
</dbReference>
<dbReference type="EMBL" id="AK303956">
    <property type="protein sequence ID" value="BAG64882.1"/>
    <property type="molecule type" value="mRNA"/>
</dbReference>
<dbReference type="EMBL" id="AL157396">
    <property type="status" value="NOT_ANNOTATED_CDS"/>
    <property type="molecule type" value="Genomic_DNA"/>
</dbReference>
<dbReference type="EMBL" id="AL358154">
    <property type="status" value="NOT_ANNOTATED_CDS"/>
    <property type="molecule type" value="Genomic_DNA"/>
</dbReference>
<dbReference type="EMBL" id="CH471066">
    <property type="protein sequence ID" value="EAW50052.1"/>
    <property type="molecule type" value="Genomic_DNA"/>
</dbReference>
<dbReference type="EMBL" id="BC022500">
    <property type="protein sequence ID" value="AAH22500.1"/>
    <property type="molecule type" value="mRNA"/>
</dbReference>
<dbReference type="CCDS" id="CCDS7431.1">
    <molecule id="O95970-1"/>
</dbReference>
<dbReference type="CCDS" id="CCDS76325.1">
    <molecule id="O95970-2"/>
</dbReference>
<dbReference type="CCDS" id="CCDS81490.1">
    <molecule id="O95970-3"/>
</dbReference>
<dbReference type="RefSeq" id="NP_001295204.1">
    <molecule id="O95970-2"/>
    <property type="nucleotide sequence ID" value="NM_001308275.2"/>
</dbReference>
<dbReference type="RefSeq" id="NP_001295205.1">
    <molecule id="O95970-3"/>
    <property type="nucleotide sequence ID" value="NM_001308276.2"/>
</dbReference>
<dbReference type="RefSeq" id="NP_005088.1">
    <molecule id="O95970-1"/>
    <property type="nucleotide sequence ID" value="NM_005097.4"/>
</dbReference>
<dbReference type="PDB" id="5Y2Z">
    <property type="method" value="X-ray"/>
    <property type="resolution" value="2.67 A"/>
    <property type="chains" value="B/D/F/H/J/L=224-557"/>
</dbReference>
<dbReference type="PDB" id="5Y30">
    <property type="method" value="X-ray"/>
    <property type="resolution" value="1.78 A"/>
    <property type="chains" value="A=37-223"/>
</dbReference>
<dbReference type="PDB" id="5Y31">
    <property type="method" value="X-ray"/>
    <property type="resolution" value="7.12 A"/>
    <property type="chains" value="B/D=37-557"/>
</dbReference>
<dbReference type="PDB" id="8HPY">
    <property type="method" value="X-ray"/>
    <property type="resolution" value="5.87 A"/>
    <property type="chains" value="D/E=39-557"/>
</dbReference>
<dbReference type="PDB" id="8HQ1">
    <property type="method" value="X-ray"/>
    <property type="resolution" value="4.17 A"/>
    <property type="chains" value="D/E/F=39-557"/>
</dbReference>
<dbReference type="PDB" id="8HQ2">
    <property type="method" value="X-ray"/>
    <property type="resolution" value="2.93 A"/>
    <property type="chains" value="D/E=39-557"/>
</dbReference>
<dbReference type="PDB" id="8Y6B">
    <property type="method" value="X-ray"/>
    <property type="resolution" value="3.49 A"/>
    <property type="chains" value="D/E/F=39-557"/>
</dbReference>
<dbReference type="PDBsum" id="5Y2Z"/>
<dbReference type="PDBsum" id="5Y30"/>
<dbReference type="PDBsum" id="5Y31"/>
<dbReference type="PDBsum" id="8HPY"/>
<dbReference type="PDBsum" id="8HQ1"/>
<dbReference type="PDBsum" id="8HQ2"/>
<dbReference type="PDBsum" id="8Y6B"/>
<dbReference type="SMR" id="O95970"/>
<dbReference type="BioGRID" id="114645">
    <property type="interactions" value="67"/>
</dbReference>
<dbReference type="CORUM" id="O95970"/>
<dbReference type="FunCoup" id="O95970">
    <property type="interactions" value="226"/>
</dbReference>
<dbReference type="IntAct" id="O95970">
    <property type="interactions" value="49"/>
</dbReference>
<dbReference type="STRING" id="9606.ENSP00000360472"/>
<dbReference type="GlyCosmos" id="O95970">
    <property type="glycosylation" value="3 sites, No reported glycans"/>
</dbReference>
<dbReference type="GlyGen" id="O95970">
    <property type="glycosylation" value="7 sites, 1 N-linked glycan (1 site), 1 O-linked glycan (3 sites)"/>
</dbReference>
<dbReference type="iPTMnet" id="O95970"/>
<dbReference type="PhosphoSitePlus" id="O95970"/>
<dbReference type="BioMuta" id="LGI1"/>
<dbReference type="jPOST" id="O95970"/>
<dbReference type="MassIVE" id="O95970"/>
<dbReference type="PaxDb" id="9606-ENSP00000360472"/>
<dbReference type="PeptideAtlas" id="O95970"/>
<dbReference type="ProteomicsDB" id="51151">
    <molecule id="O95970-1"/>
</dbReference>
<dbReference type="ProteomicsDB" id="51152">
    <molecule id="O95970-2"/>
</dbReference>
<dbReference type="ProteomicsDB" id="51153">
    <molecule id="O95970-3"/>
</dbReference>
<dbReference type="TopDownProteomics" id="O95970-3">
    <molecule id="O95970-3"/>
</dbReference>
<dbReference type="ABCD" id="O95970">
    <property type="antibodies" value="1 sequenced antibody"/>
</dbReference>
<dbReference type="Antibodypedia" id="30497">
    <property type="antibodies" value="274 antibodies from 35 providers"/>
</dbReference>
<dbReference type="DNASU" id="9211"/>
<dbReference type="Ensembl" id="ENST00000371413.4">
    <molecule id="O95970-2"/>
    <property type="protein sequence ID" value="ENSP00000360467.3"/>
    <property type="gene ID" value="ENSG00000108231.14"/>
</dbReference>
<dbReference type="Ensembl" id="ENST00000371418.9">
    <molecule id="O95970-1"/>
    <property type="protein sequence ID" value="ENSP00000360472.4"/>
    <property type="gene ID" value="ENSG00000108231.14"/>
</dbReference>
<dbReference type="Ensembl" id="ENST00000630047.2">
    <molecule id="O95970-3"/>
    <property type="protein sequence ID" value="ENSP00000485917.1"/>
    <property type="gene ID" value="ENSG00000108231.14"/>
</dbReference>
<dbReference type="GeneID" id="9211"/>
<dbReference type="KEGG" id="hsa:9211"/>
<dbReference type="MANE-Select" id="ENST00000371418.9">
    <property type="protein sequence ID" value="ENSP00000360472.4"/>
    <property type="RefSeq nucleotide sequence ID" value="NM_005097.4"/>
    <property type="RefSeq protein sequence ID" value="NP_005088.1"/>
</dbReference>
<dbReference type="UCSC" id="uc001kjc.5">
    <molecule id="O95970-1"/>
    <property type="organism name" value="human"/>
</dbReference>
<dbReference type="AGR" id="HGNC:6572"/>
<dbReference type="CTD" id="9211"/>
<dbReference type="DisGeNET" id="9211"/>
<dbReference type="GeneCards" id="LGI1"/>
<dbReference type="GeneReviews" id="LGI1"/>
<dbReference type="HGNC" id="HGNC:6572">
    <property type="gene designation" value="LGI1"/>
</dbReference>
<dbReference type="HPA" id="ENSG00000108231">
    <property type="expression patterns" value="Group enriched (brain, choroid plexus)"/>
</dbReference>
<dbReference type="MalaCards" id="LGI1"/>
<dbReference type="MIM" id="600512">
    <property type="type" value="phenotype"/>
</dbReference>
<dbReference type="MIM" id="604619">
    <property type="type" value="gene"/>
</dbReference>
<dbReference type="neXtProt" id="NX_O95970"/>
<dbReference type="OpenTargets" id="ENSG00000108231"/>
<dbReference type="Orphanet" id="101046">
    <property type="disease" value="Epilepsy with auditory features"/>
</dbReference>
<dbReference type="PharmGKB" id="PA30349"/>
<dbReference type="VEuPathDB" id="HostDB:ENSG00000108231"/>
<dbReference type="eggNOG" id="ENOG502REXX">
    <property type="taxonomic scope" value="Eukaryota"/>
</dbReference>
<dbReference type="GeneTree" id="ENSGT00940000159793"/>
<dbReference type="HOGENOM" id="CLU_956325_0_0_1"/>
<dbReference type="InParanoid" id="O95970"/>
<dbReference type="OMA" id="VEMNFRN"/>
<dbReference type="OrthoDB" id="6066926at2759"/>
<dbReference type="PAN-GO" id="O95970">
    <property type="GO annotations" value="1 GO annotation based on evolutionary models"/>
</dbReference>
<dbReference type="PhylomeDB" id="O95970"/>
<dbReference type="TreeFam" id="TF333155"/>
<dbReference type="PathwayCommons" id="O95970"/>
<dbReference type="Reactome" id="R-HSA-5682910">
    <property type="pathway name" value="LGI-ADAM interactions"/>
</dbReference>
<dbReference type="SignaLink" id="O95970"/>
<dbReference type="BioGRID-ORCS" id="9211">
    <property type="hits" value="45 hits in 1144 CRISPR screens"/>
</dbReference>
<dbReference type="CD-CODE" id="FB4E32DD">
    <property type="entry name" value="Presynaptic clusters and postsynaptic densities"/>
</dbReference>
<dbReference type="ChiTaRS" id="LGI1">
    <property type="organism name" value="human"/>
</dbReference>
<dbReference type="GeneWiki" id="LGI1"/>
<dbReference type="GenomeRNAi" id="9211"/>
<dbReference type="Pharos" id="O95970">
    <property type="development level" value="Tbio"/>
</dbReference>
<dbReference type="PRO" id="PR:O95970"/>
<dbReference type="Proteomes" id="UP000005640">
    <property type="component" value="Chromosome 10"/>
</dbReference>
<dbReference type="RNAct" id="O95970">
    <property type="molecule type" value="protein"/>
</dbReference>
<dbReference type="Bgee" id="ENSG00000108231">
    <property type="expression patterns" value="Expressed in pons and 135 other cell types or tissues"/>
</dbReference>
<dbReference type="ExpressionAtlas" id="O95970">
    <property type="expression patterns" value="baseline and differential"/>
</dbReference>
<dbReference type="GO" id="GO:0043194">
    <property type="term" value="C:axon initial segment"/>
    <property type="evidence" value="ECO:0007669"/>
    <property type="project" value="Ensembl"/>
</dbReference>
<dbReference type="GO" id="GO:0005737">
    <property type="term" value="C:cytoplasm"/>
    <property type="evidence" value="ECO:0000250"/>
    <property type="project" value="UniProtKB"/>
</dbReference>
<dbReference type="GO" id="GO:0030425">
    <property type="term" value="C:dendrite"/>
    <property type="evidence" value="ECO:0007669"/>
    <property type="project" value="Ensembl"/>
</dbReference>
<dbReference type="GO" id="GO:0005783">
    <property type="term" value="C:endoplasmic reticulum"/>
    <property type="evidence" value="ECO:0007669"/>
    <property type="project" value="UniProtKB-SubCell"/>
</dbReference>
<dbReference type="GO" id="GO:0005576">
    <property type="term" value="C:extracellular region"/>
    <property type="evidence" value="ECO:0000304"/>
    <property type="project" value="Reactome"/>
</dbReference>
<dbReference type="GO" id="GO:0005615">
    <property type="term" value="C:extracellular space"/>
    <property type="evidence" value="ECO:0000314"/>
    <property type="project" value="UniProtKB"/>
</dbReference>
<dbReference type="GO" id="GO:0098978">
    <property type="term" value="C:glutamatergic synapse"/>
    <property type="evidence" value="ECO:0007669"/>
    <property type="project" value="Ensembl"/>
</dbReference>
<dbReference type="GO" id="GO:0005794">
    <property type="term" value="C:Golgi apparatus"/>
    <property type="evidence" value="ECO:0007669"/>
    <property type="project" value="UniProtKB-SubCell"/>
</dbReference>
<dbReference type="GO" id="GO:0043083">
    <property type="term" value="C:synaptic cleft"/>
    <property type="evidence" value="ECO:0007669"/>
    <property type="project" value="Ensembl"/>
</dbReference>
<dbReference type="GO" id="GO:0005102">
    <property type="term" value="F:signaling receptor binding"/>
    <property type="evidence" value="ECO:0000353"/>
    <property type="project" value="DFLAT"/>
</dbReference>
<dbReference type="GO" id="GO:0007411">
    <property type="term" value="P:axon guidance"/>
    <property type="evidence" value="ECO:0000315"/>
    <property type="project" value="DFLAT"/>
</dbReference>
<dbReference type="GO" id="GO:0007399">
    <property type="term" value="P:nervous system development"/>
    <property type="evidence" value="ECO:0000304"/>
    <property type="project" value="ProtInc"/>
</dbReference>
<dbReference type="GO" id="GO:0031175">
    <property type="term" value="P:neuron projection development"/>
    <property type="evidence" value="ECO:0000315"/>
    <property type="project" value="DFLAT"/>
</dbReference>
<dbReference type="GO" id="GO:0099645">
    <property type="term" value="P:neurotransmitter receptor localization to postsynaptic specialization membrane"/>
    <property type="evidence" value="ECO:0007669"/>
    <property type="project" value="Ensembl"/>
</dbReference>
<dbReference type="GO" id="GO:0030307">
    <property type="term" value="P:positive regulation of cell growth"/>
    <property type="evidence" value="ECO:0000315"/>
    <property type="project" value="DFLAT"/>
</dbReference>
<dbReference type="GO" id="GO:0050806">
    <property type="term" value="P:positive regulation of synaptic transmission"/>
    <property type="evidence" value="ECO:0000250"/>
    <property type="project" value="UniProtKB"/>
</dbReference>
<dbReference type="FunFam" id="3.80.10.10:FF:000017">
    <property type="entry name" value="leucine-rich repeat LGI family member 3"/>
    <property type="match status" value="1"/>
</dbReference>
<dbReference type="Gene3D" id="3.80.10.10">
    <property type="entry name" value="Ribonuclease Inhibitor"/>
    <property type="match status" value="1"/>
</dbReference>
<dbReference type="InterPro" id="IPR000483">
    <property type="entry name" value="Cys-rich_flank_reg_C"/>
</dbReference>
<dbReference type="InterPro" id="IPR009039">
    <property type="entry name" value="EAR"/>
</dbReference>
<dbReference type="InterPro" id="IPR005492">
    <property type="entry name" value="EPTP"/>
</dbReference>
<dbReference type="InterPro" id="IPR001611">
    <property type="entry name" value="Leu-rich_rpt"/>
</dbReference>
<dbReference type="InterPro" id="IPR003591">
    <property type="entry name" value="Leu-rich_rpt_typical-subtyp"/>
</dbReference>
<dbReference type="InterPro" id="IPR051295">
    <property type="entry name" value="LGI_related"/>
</dbReference>
<dbReference type="InterPro" id="IPR032675">
    <property type="entry name" value="LRR_dom_sf"/>
</dbReference>
<dbReference type="PANTHER" id="PTHR24367:SF17">
    <property type="entry name" value="LEUCINE-RICH GLIOMA-INACTIVATED PROTEIN 1"/>
    <property type="match status" value="1"/>
</dbReference>
<dbReference type="PANTHER" id="PTHR24367">
    <property type="entry name" value="LEUCINE-RICH REPEAT-CONTAINING PROTEIN"/>
    <property type="match status" value="1"/>
</dbReference>
<dbReference type="Pfam" id="PF03736">
    <property type="entry name" value="EPTP"/>
    <property type="match status" value="7"/>
</dbReference>
<dbReference type="Pfam" id="PF13855">
    <property type="entry name" value="LRR_8"/>
    <property type="match status" value="1"/>
</dbReference>
<dbReference type="SMART" id="SM00369">
    <property type="entry name" value="LRR_TYP"/>
    <property type="match status" value="3"/>
</dbReference>
<dbReference type="SMART" id="SM00082">
    <property type="entry name" value="LRRCT"/>
    <property type="match status" value="1"/>
</dbReference>
<dbReference type="SUPFAM" id="SSF52058">
    <property type="entry name" value="L domain-like"/>
    <property type="match status" value="1"/>
</dbReference>
<dbReference type="PROSITE" id="PS50912">
    <property type="entry name" value="EAR"/>
    <property type="match status" value="7"/>
</dbReference>
<comment type="function">
    <text evidence="1 10 12">Regulates voltage-gated potassium channels assembled from KCNA1, KCNA4 and KCNAB1. It slows down channel inactivation by precluding channel closure mediated by the KCNAB1 subunit. Ligand for ADAM22 that positively regulates synaptic transmission mediated by AMPA-type glutamate receptors (By similarity). Plays a role in suppressing the production of MMP1/3 through the phosphatidylinositol 3-kinase/ERK pathway. May play a role in the control of neuroblastoma cell survival.</text>
</comment>
<comment type="subunit">
    <text evidence="1 20">Oligomer. Interacts with KCNA1 within a complex containing KCNA1, KCNA4 and KCNAB1. Part of a complex containing ADAM22, DLG4/PSD95 and CACNG2/Stargazin (PubMed:27066583). Can bind to ADAM11 and ADAM23.</text>
</comment>
<comment type="subcellular location">
    <subcellularLocation>
        <location evidence="13 14 15">Secreted</location>
    </subcellularLocation>
    <subcellularLocation>
        <location evidence="2">Synapse</location>
    </subcellularLocation>
    <subcellularLocation>
        <location evidence="3">Cytoplasm</location>
    </subcellularLocation>
</comment>
<comment type="subcellular location">
    <molecule>Isoform 1</molecule>
    <subcellularLocation>
        <location evidence="14">Golgi apparatus</location>
    </subcellularLocation>
    <subcellularLocation>
        <location evidence="21">Secreted</location>
    </subcellularLocation>
    <subcellularLocation>
        <location evidence="3">Cytoplasm</location>
    </subcellularLocation>
</comment>
<comment type="subcellular location">
    <molecule>Isoform 2</molecule>
    <subcellularLocation>
        <location evidence="14">Endoplasmic reticulum</location>
    </subcellularLocation>
    <subcellularLocation>
        <location evidence="3">Cytoplasm</location>
    </subcellularLocation>
</comment>
<comment type="alternative products">
    <event type="alternative splicing"/>
    <isoform>
        <id>O95970-1</id>
        <name>1</name>
        <sequence type="displayed"/>
    </isoform>
    <isoform>
        <id>O95970-2</id>
        <name>2</name>
        <sequence type="described" ref="VSP_007678 VSP_007679"/>
    </isoform>
    <isoform>
        <id>O95970-3</id>
        <name>3</name>
        <sequence type="described" ref="VSP_038234"/>
    </isoform>
</comment>
<comment type="tissue specificity">
    <text evidence="12">Predominantly expressed in neural tissues, especially in brain. Expression is reduced in low-grade brain tumors and significantly reduced or absent in malignant gliomas.</text>
</comment>
<comment type="tissue specificity">
    <molecule>Isoform 1</molecule>
    <text evidence="13">Expressed in the occipital cortex and hippocampus; higher amounts are observed in the parietal and frontal cortices, putamen, and, particularly, in the temporal neocortex, where it is between 3 and 5 times more abundant than in the hippocampus (at protein level) (PubMed:16787412). Expression is absent in the cerebellum (PubMed:16787412).</text>
</comment>
<comment type="tissue specificity">
    <molecule>Isoform 3</molecule>
    <text evidence="13">Abundantly expressed in the occipital cortex and weakly expressed in the hippocampus (at protein level).</text>
</comment>
<comment type="induction">
    <text evidence="12">Down-regulated in neuroblastoma cells.</text>
</comment>
<comment type="PTM">
    <text evidence="14">Glycosylated.</text>
</comment>
<comment type="disease" evidence="6 7 8 9 11 14 15 16 17 18 19">
    <disease id="DI-00628">
        <name>Epilepsy, familial temporal lobe, 1</name>
        <acronym>ETL1</acronym>
        <description>A focal form of epilepsy characterized by recurrent seizures that arise from foci within the temporal lobe. Seizures are usually accompanied by sensory symptoms, most often auditory in nature.</description>
        <dbReference type="MIM" id="600512"/>
    </disease>
    <text>The disease is caused by variants affecting the gene represented in this entry.</text>
</comment>
<comment type="online information" name="Atlas of Genetics and Cytogenetics in Oncology and Haematology">
    <link uri="https://atlasgeneticsoncology.org/gene/311/LGI1"/>
</comment>
<keyword id="KW-0002">3D-structure</keyword>
<keyword id="KW-0025">Alternative splicing</keyword>
<keyword id="KW-0963">Cytoplasm</keyword>
<keyword id="KW-0225">Disease variant</keyword>
<keyword id="KW-0256">Endoplasmic reticulum</keyword>
<keyword id="KW-0887">Epilepsy</keyword>
<keyword id="KW-0325">Glycoprotein</keyword>
<keyword id="KW-0333">Golgi apparatus</keyword>
<keyword id="KW-0433">Leucine-rich repeat</keyword>
<keyword id="KW-1267">Proteomics identification</keyword>
<keyword id="KW-1185">Reference proteome</keyword>
<keyword id="KW-0677">Repeat</keyword>
<keyword id="KW-0964">Secreted</keyword>
<keyword id="KW-0732">Signal</keyword>
<keyword id="KW-0770">Synapse</keyword>
<sequence length="557" mass="63818">MESERSKRMGNACIPLKRIAYFLCLLSALLLTEGKKPAKPKCPAVCTCTKDNALCENARSIPRTVPPDVISLSFVRSGFTEISEGSFLFTPSLQLLLFTSNSFDVISDDAFIGLPHLEYLFIENNNIKSISRHTFRGLKSLIHLSLANNNLQTLPKDIFKGLDSLTNVDLRGNSFNCDCKLKWLVEWLGHTNATVEDIYCEGPPEYKKRKINSLSSKDFDCIITEFAKSQDLPYQSLSIDTFSYLNDEYVVIAQPFTGKCIFLEWDHVEKTFRNYDNITGTSTVVCKPIVIETQLYVIVAQLFGGSHIYKRDSFANKFIKIQDIEILKIRKPNDIETFKIENNWYFVVADSSKAGFTTIYKWNGNGFYSHQSLHAWYRDTDVEYLEIVRTPQTLRTPHLILSSSSQRPVIYQWNKATQLFTNQTDIPNMEDVYAVKHFSVKGDVYICLTRFIGDSKVMKWGGSSFQDIQRMPSRGSMVFQPLQINNYQYAILGSDYSFTQVYNWDAEKAKFVKFQELNVQAPRSFTHVSINKRNFLFASSFKGNTQIYKHVIVDLSA</sequence>
<accession>O95970</accession>
<accession>A8K0Z1</accession>
<accession>B4E1S0</accession>
<accession>Q5W001</accession>
<accession>Q5W002</accession>
<accession>Q8NI23</accession>
<accession>Q96LF5</accession>
<proteinExistence type="evidence at protein level"/>